<accession>A1TJ40</accession>
<sequence length="288" mass="31220">MAAGKEIRGKIKSVENTKKITKAMEMVAASKMRKAQDRMRAARPYSEKIRNIAANLGQANPEYVHPFMKSNDAKTAGFIVVTTDKGLCGGMNTNVLRAVTAKLRELQSQGVSTQAVAIGNKGLGFLNRIGAQVVSHATGLGDTPHLDKLIGPVKVLLDAYAEGKINGVYLAYTKFINTMKQESVVEQLLPLSSEKMQAEKTEHGWDYIYEPDAQSVIDDLLVRYVESLIYQAVAENMASEQSARMVAMKAATDNAGNVIGELKLVYNKTRQAAITKELSEIVAGAAAV</sequence>
<reference key="1">
    <citation type="submission" date="2006-12" db="EMBL/GenBank/DDBJ databases">
        <title>Complete sequence of Acidovorax avenae subsp. citrulli AAC00-1.</title>
        <authorList>
            <person name="Copeland A."/>
            <person name="Lucas S."/>
            <person name="Lapidus A."/>
            <person name="Barry K."/>
            <person name="Detter J.C."/>
            <person name="Glavina del Rio T."/>
            <person name="Dalin E."/>
            <person name="Tice H."/>
            <person name="Pitluck S."/>
            <person name="Kiss H."/>
            <person name="Brettin T."/>
            <person name="Bruce D."/>
            <person name="Han C."/>
            <person name="Tapia R."/>
            <person name="Gilna P."/>
            <person name="Schmutz J."/>
            <person name="Larimer F."/>
            <person name="Land M."/>
            <person name="Hauser L."/>
            <person name="Kyrpides N."/>
            <person name="Kim E."/>
            <person name="Stahl D."/>
            <person name="Richardson P."/>
        </authorList>
    </citation>
    <scope>NUCLEOTIDE SEQUENCE [LARGE SCALE GENOMIC DNA]</scope>
    <source>
        <strain>AAC00-1</strain>
    </source>
</reference>
<comment type="function">
    <text evidence="1">Produces ATP from ADP in the presence of a proton gradient across the membrane. The gamma chain is believed to be important in regulating ATPase activity and the flow of protons through the CF(0) complex.</text>
</comment>
<comment type="subunit">
    <text evidence="1">F-type ATPases have 2 components, CF(1) - the catalytic core - and CF(0) - the membrane proton channel. CF(1) has five subunits: alpha(3), beta(3), gamma(1), delta(1), epsilon(1). CF(0) has three main subunits: a, b and c.</text>
</comment>
<comment type="subcellular location">
    <subcellularLocation>
        <location evidence="1">Cell inner membrane</location>
        <topology evidence="1">Peripheral membrane protein</topology>
    </subcellularLocation>
</comment>
<comment type="similarity">
    <text evidence="1">Belongs to the ATPase gamma chain family.</text>
</comment>
<proteinExistence type="inferred from homology"/>
<gene>
    <name evidence="1" type="primary">atpG</name>
    <name type="ordered locus">Aave_0371</name>
</gene>
<dbReference type="EMBL" id="CP000512">
    <property type="protein sequence ID" value="ABM30978.1"/>
    <property type="molecule type" value="Genomic_DNA"/>
</dbReference>
<dbReference type="RefSeq" id="WP_011793555.1">
    <property type="nucleotide sequence ID" value="NC_008752.1"/>
</dbReference>
<dbReference type="SMR" id="A1TJ40"/>
<dbReference type="STRING" id="397945.Aave_0371"/>
<dbReference type="GeneID" id="79790179"/>
<dbReference type="KEGG" id="aav:Aave_0371"/>
<dbReference type="eggNOG" id="COG0224">
    <property type="taxonomic scope" value="Bacteria"/>
</dbReference>
<dbReference type="HOGENOM" id="CLU_050669_0_1_4"/>
<dbReference type="OrthoDB" id="9812769at2"/>
<dbReference type="Proteomes" id="UP000002596">
    <property type="component" value="Chromosome"/>
</dbReference>
<dbReference type="GO" id="GO:0005886">
    <property type="term" value="C:plasma membrane"/>
    <property type="evidence" value="ECO:0007669"/>
    <property type="project" value="UniProtKB-SubCell"/>
</dbReference>
<dbReference type="GO" id="GO:0045259">
    <property type="term" value="C:proton-transporting ATP synthase complex"/>
    <property type="evidence" value="ECO:0007669"/>
    <property type="project" value="UniProtKB-KW"/>
</dbReference>
<dbReference type="GO" id="GO:0005524">
    <property type="term" value="F:ATP binding"/>
    <property type="evidence" value="ECO:0007669"/>
    <property type="project" value="UniProtKB-UniRule"/>
</dbReference>
<dbReference type="GO" id="GO:0046933">
    <property type="term" value="F:proton-transporting ATP synthase activity, rotational mechanism"/>
    <property type="evidence" value="ECO:0007669"/>
    <property type="project" value="UniProtKB-UniRule"/>
</dbReference>
<dbReference type="GO" id="GO:0042777">
    <property type="term" value="P:proton motive force-driven plasma membrane ATP synthesis"/>
    <property type="evidence" value="ECO:0007669"/>
    <property type="project" value="UniProtKB-UniRule"/>
</dbReference>
<dbReference type="CDD" id="cd12151">
    <property type="entry name" value="F1-ATPase_gamma"/>
    <property type="match status" value="1"/>
</dbReference>
<dbReference type="FunFam" id="1.10.287.80:FF:000005">
    <property type="entry name" value="ATP synthase gamma chain"/>
    <property type="match status" value="1"/>
</dbReference>
<dbReference type="Gene3D" id="3.40.1380.10">
    <property type="match status" value="1"/>
</dbReference>
<dbReference type="Gene3D" id="1.10.287.80">
    <property type="entry name" value="ATP synthase, gamma subunit, helix hairpin domain"/>
    <property type="match status" value="1"/>
</dbReference>
<dbReference type="HAMAP" id="MF_00815">
    <property type="entry name" value="ATP_synth_gamma_bact"/>
    <property type="match status" value="1"/>
</dbReference>
<dbReference type="InterPro" id="IPR035968">
    <property type="entry name" value="ATP_synth_F1_ATPase_gsu"/>
</dbReference>
<dbReference type="InterPro" id="IPR000131">
    <property type="entry name" value="ATP_synth_F1_gsu"/>
</dbReference>
<dbReference type="InterPro" id="IPR023632">
    <property type="entry name" value="ATP_synth_F1_gsu_CS"/>
</dbReference>
<dbReference type="NCBIfam" id="TIGR01146">
    <property type="entry name" value="ATPsyn_F1gamma"/>
    <property type="match status" value="1"/>
</dbReference>
<dbReference type="NCBIfam" id="NF004144">
    <property type="entry name" value="PRK05621.1-1"/>
    <property type="match status" value="1"/>
</dbReference>
<dbReference type="PANTHER" id="PTHR11693">
    <property type="entry name" value="ATP SYNTHASE GAMMA CHAIN"/>
    <property type="match status" value="1"/>
</dbReference>
<dbReference type="PANTHER" id="PTHR11693:SF22">
    <property type="entry name" value="ATP SYNTHASE SUBUNIT GAMMA, MITOCHONDRIAL"/>
    <property type="match status" value="1"/>
</dbReference>
<dbReference type="Pfam" id="PF00231">
    <property type="entry name" value="ATP-synt"/>
    <property type="match status" value="1"/>
</dbReference>
<dbReference type="PRINTS" id="PR00126">
    <property type="entry name" value="ATPASEGAMMA"/>
</dbReference>
<dbReference type="SUPFAM" id="SSF52943">
    <property type="entry name" value="ATP synthase (F1-ATPase), gamma subunit"/>
    <property type="match status" value="1"/>
</dbReference>
<dbReference type="PROSITE" id="PS00153">
    <property type="entry name" value="ATPASE_GAMMA"/>
    <property type="match status" value="1"/>
</dbReference>
<evidence type="ECO:0000255" key="1">
    <source>
        <dbReference type="HAMAP-Rule" id="MF_00815"/>
    </source>
</evidence>
<keyword id="KW-0066">ATP synthesis</keyword>
<keyword id="KW-0997">Cell inner membrane</keyword>
<keyword id="KW-1003">Cell membrane</keyword>
<keyword id="KW-0139">CF(1)</keyword>
<keyword id="KW-0375">Hydrogen ion transport</keyword>
<keyword id="KW-0406">Ion transport</keyword>
<keyword id="KW-0472">Membrane</keyword>
<keyword id="KW-0813">Transport</keyword>
<protein>
    <recommendedName>
        <fullName evidence="1">ATP synthase gamma chain</fullName>
    </recommendedName>
    <alternativeName>
        <fullName evidence="1">ATP synthase F1 sector gamma subunit</fullName>
    </alternativeName>
    <alternativeName>
        <fullName evidence="1">F-ATPase gamma subunit</fullName>
    </alternativeName>
</protein>
<feature type="chain" id="PRO_1000053142" description="ATP synthase gamma chain">
    <location>
        <begin position="1"/>
        <end position="288"/>
    </location>
</feature>
<organism>
    <name type="scientific">Paracidovorax citrulli (strain AAC00-1)</name>
    <name type="common">Acidovorax citrulli</name>
    <dbReference type="NCBI Taxonomy" id="397945"/>
    <lineage>
        <taxon>Bacteria</taxon>
        <taxon>Pseudomonadati</taxon>
        <taxon>Pseudomonadota</taxon>
        <taxon>Betaproteobacteria</taxon>
        <taxon>Burkholderiales</taxon>
        <taxon>Comamonadaceae</taxon>
        <taxon>Paracidovorax</taxon>
    </lineage>
</organism>
<name>ATPG_PARC0</name>